<reference key="1">
    <citation type="journal article" date="2001" name="Proc. Natl. Acad. Sci. U.S.A.">
        <title>Analysis of the chromosome sequence of the legume symbiont Sinorhizobium meliloti strain 1021.</title>
        <authorList>
            <person name="Capela D."/>
            <person name="Barloy-Hubler F."/>
            <person name="Gouzy J."/>
            <person name="Bothe G."/>
            <person name="Ampe F."/>
            <person name="Batut J."/>
            <person name="Boistard P."/>
            <person name="Becker A."/>
            <person name="Boutry M."/>
            <person name="Cadieu E."/>
            <person name="Dreano S."/>
            <person name="Gloux S."/>
            <person name="Godrie T."/>
            <person name="Goffeau A."/>
            <person name="Kahn D."/>
            <person name="Kiss E."/>
            <person name="Lelaure V."/>
            <person name="Masuy D."/>
            <person name="Pohl T."/>
            <person name="Portetelle D."/>
            <person name="Puehler A."/>
            <person name="Purnelle B."/>
            <person name="Ramsperger U."/>
            <person name="Renard C."/>
            <person name="Thebault P."/>
            <person name="Vandenbol M."/>
            <person name="Weidner S."/>
            <person name="Galibert F."/>
        </authorList>
    </citation>
    <scope>NUCLEOTIDE SEQUENCE [LARGE SCALE GENOMIC DNA]</scope>
    <source>
        <strain>1021</strain>
    </source>
</reference>
<reference key="2">
    <citation type="journal article" date="2001" name="Science">
        <title>The composite genome of the legume symbiont Sinorhizobium meliloti.</title>
        <authorList>
            <person name="Galibert F."/>
            <person name="Finan T.M."/>
            <person name="Long S.R."/>
            <person name="Puehler A."/>
            <person name="Abola P."/>
            <person name="Ampe F."/>
            <person name="Barloy-Hubler F."/>
            <person name="Barnett M.J."/>
            <person name="Becker A."/>
            <person name="Boistard P."/>
            <person name="Bothe G."/>
            <person name="Boutry M."/>
            <person name="Bowser L."/>
            <person name="Buhrmester J."/>
            <person name="Cadieu E."/>
            <person name="Capela D."/>
            <person name="Chain P."/>
            <person name="Cowie A."/>
            <person name="Davis R.W."/>
            <person name="Dreano S."/>
            <person name="Federspiel N.A."/>
            <person name="Fisher R.F."/>
            <person name="Gloux S."/>
            <person name="Godrie T."/>
            <person name="Goffeau A."/>
            <person name="Golding B."/>
            <person name="Gouzy J."/>
            <person name="Gurjal M."/>
            <person name="Hernandez-Lucas I."/>
            <person name="Hong A."/>
            <person name="Huizar L."/>
            <person name="Hyman R.W."/>
            <person name="Jones T."/>
            <person name="Kahn D."/>
            <person name="Kahn M.L."/>
            <person name="Kalman S."/>
            <person name="Keating D.H."/>
            <person name="Kiss E."/>
            <person name="Komp C."/>
            <person name="Lelaure V."/>
            <person name="Masuy D."/>
            <person name="Palm C."/>
            <person name="Peck M.C."/>
            <person name="Pohl T.M."/>
            <person name="Portetelle D."/>
            <person name="Purnelle B."/>
            <person name="Ramsperger U."/>
            <person name="Surzycki R."/>
            <person name="Thebault P."/>
            <person name="Vandenbol M."/>
            <person name="Vorhoelter F.J."/>
            <person name="Weidner S."/>
            <person name="Wells D.H."/>
            <person name="Wong K."/>
            <person name="Yeh K.-C."/>
            <person name="Batut J."/>
        </authorList>
    </citation>
    <scope>NUCLEOTIDE SEQUENCE [LARGE SCALE GENOMIC DNA]</scope>
    <source>
        <strain>1021</strain>
    </source>
</reference>
<dbReference type="EC" id="3.6.1.-" evidence="1"/>
<dbReference type="EMBL" id="AL591688">
    <property type="protein sequence ID" value="CAC41389.1"/>
    <property type="molecule type" value="Genomic_DNA"/>
</dbReference>
<dbReference type="RefSeq" id="NP_384108.1">
    <property type="nucleotide sequence ID" value="NC_003047.1"/>
</dbReference>
<dbReference type="RefSeq" id="WP_010968286.1">
    <property type="nucleotide sequence ID" value="NC_003047.1"/>
</dbReference>
<dbReference type="SMR" id="Q92TF1"/>
<dbReference type="EnsemblBacteria" id="CAC41389">
    <property type="protein sequence ID" value="CAC41389"/>
    <property type="gene ID" value="SMc02792"/>
</dbReference>
<dbReference type="KEGG" id="sme:SMc02792"/>
<dbReference type="PATRIC" id="fig|266834.11.peg.1354"/>
<dbReference type="eggNOG" id="COG0424">
    <property type="taxonomic scope" value="Bacteria"/>
</dbReference>
<dbReference type="HOGENOM" id="CLU_040416_1_1_5"/>
<dbReference type="OrthoDB" id="9813962at2"/>
<dbReference type="Proteomes" id="UP000001976">
    <property type="component" value="Chromosome"/>
</dbReference>
<dbReference type="GO" id="GO:0005737">
    <property type="term" value="C:cytoplasm"/>
    <property type="evidence" value="ECO:0007669"/>
    <property type="project" value="UniProtKB-SubCell"/>
</dbReference>
<dbReference type="GO" id="GO:0047429">
    <property type="term" value="F:nucleoside triphosphate diphosphatase activity"/>
    <property type="evidence" value="ECO:0007669"/>
    <property type="project" value="InterPro"/>
</dbReference>
<dbReference type="GO" id="GO:0009117">
    <property type="term" value="P:nucleotide metabolic process"/>
    <property type="evidence" value="ECO:0007669"/>
    <property type="project" value="UniProtKB-KW"/>
</dbReference>
<dbReference type="CDD" id="cd00555">
    <property type="entry name" value="Maf"/>
    <property type="match status" value="1"/>
</dbReference>
<dbReference type="Gene3D" id="3.90.950.10">
    <property type="match status" value="1"/>
</dbReference>
<dbReference type="HAMAP" id="MF_00528">
    <property type="entry name" value="Maf"/>
    <property type="match status" value="1"/>
</dbReference>
<dbReference type="InterPro" id="IPR029001">
    <property type="entry name" value="ITPase-like_fam"/>
</dbReference>
<dbReference type="InterPro" id="IPR003697">
    <property type="entry name" value="Maf-like"/>
</dbReference>
<dbReference type="NCBIfam" id="TIGR00172">
    <property type="entry name" value="maf"/>
    <property type="match status" value="1"/>
</dbReference>
<dbReference type="NCBIfam" id="NF002690">
    <property type="entry name" value="PRK02478.1"/>
    <property type="match status" value="1"/>
</dbReference>
<dbReference type="PANTHER" id="PTHR43213">
    <property type="entry name" value="BIFUNCTIONAL DTTP/UTP PYROPHOSPHATASE/METHYLTRANSFERASE PROTEIN-RELATED"/>
    <property type="match status" value="1"/>
</dbReference>
<dbReference type="PANTHER" id="PTHR43213:SF5">
    <property type="entry name" value="BIFUNCTIONAL DTTP_UTP PYROPHOSPHATASE_METHYLTRANSFERASE PROTEIN-RELATED"/>
    <property type="match status" value="1"/>
</dbReference>
<dbReference type="Pfam" id="PF02545">
    <property type="entry name" value="Maf"/>
    <property type="match status" value="1"/>
</dbReference>
<dbReference type="PIRSF" id="PIRSF006305">
    <property type="entry name" value="Maf"/>
    <property type="match status" value="1"/>
</dbReference>
<dbReference type="SUPFAM" id="SSF52972">
    <property type="entry name" value="ITPase-like"/>
    <property type="match status" value="1"/>
</dbReference>
<evidence type="ECO:0000255" key="1">
    <source>
        <dbReference type="HAMAP-Rule" id="MF_00528"/>
    </source>
</evidence>
<feature type="chain" id="PRO_0000123054" description="7-methyl-GTP pyrophosphatase">
    <location>
        <begin position="1"/>
        <end position="199"/>
    </location>
</feature>
<feature type="active site" description="Proton acceptor" evidence="1">
    <location>
        <position position="76"/>
    </location>
</feature>
<feature type="site" description="Important for substrate specificity" evidence="1">
    <location>
        <position position="13"/>
    </location>
</feature>
<feature type="site" description="Important for substrate specificity" evidence="1">
    <location>
        <position position="77"/>
    </location>
</feature>
<feature type="site" description="Important for substrate specificity" evidence="1">
    <location>
        <position position="162"/>
    </location>
</feature>
<gene>
    <name type="ordered locus">R00002</name>
    <name type="ORF">SMc02792</name>
</gene>
<organism>
    <name type="scientific">Rhizobium meliloti (strain 1021)</name>
    <name type="common">Ensifer meliloti</name>
    <name type="synonym">Sinorhizobium meliloti</name>
    <dbReference type="NCBI Taxonomy" id="266834"/>
    <lineage>
        <taxon>Bacteria</taxon>
        <taxon>Pseudomonadati</taxon>
        <taxon>Pseudomonadota</taxon>
        <taxon>Alphaproteobacteria</taxon>
        <taxon>Hyphomicrobiales</taxon>
        <taxon>Rhizobiaceae</taxon>
        <taxon>Sinorhizobium/Ensifer group</taxon>
        <taxon>Sinorhizobium</taxon>
    </lineage>
</organism>
<comment type="function">
    <text evidence="1">Nucleoside triphosphate pyrophosphatase that hydrolyzes 7-methyl-GTP (m(7)GTP). May have a dual role in cell division arrest and in preventing the incorporation of modified nucleotides into cellular nucleic acids.</text>
</comment>
<comment type="catalytic activity">
    <reaction evidence="1">
        <text>N(7)-methyl-GTP + H2O = N(7)-methyl-GMP + diphosphate + H(+)</text>
        <dbReference type="Rhea" id="RHEA:58744"/>
        <dbReference type="ChEBI" id="CHEBI:15377"/>
        <dbReference type="ChEBI" id="CHEBI:15378"/>
        <dbReference type="ChEBI" id="CHEBI:33019"/>
        <dbReference type="ChEBI" id="CHEBI:58285"/>
        <dbReference type="ChEBI" id="CHEBI:87133"/>
    </reaction>
</comment>
<comment type="cofactor">
    <cofactor evidence="1">
        <name>a divalent metal cation</name>
        <dbReference type="ChEBI" id="CHEBI:60240"/>
    </cofactor>
</comment>
<comment type="subcellular location">
    <subcellularLocation>
        <location evidence="1">Cytoplasm</location>
    </subcellularLocation>
</comment>
<comment type="similarity">
    <text evidence="1">Belongs to the Maf family. YceF subfamily.</text>
</comment>
<accession>Q92TF1</accession>
<protein>
    <recommendedName>
        <fullName evidence="1">7-methyl-GTP pyrophosphatase</fullName>
        <shortName evidence="1">m(7)GTP pyrophosphatase</shortName>
        <ecNumber evidence="1">3.6.1.-</ecNumber>
    </recommendedName>
</protein>
<sequence length="199" mass="21553">MKPLLILASASPFRRALLSNAGLAFEARAAAIDERALEQPLEASGASPADVALALAEAKAKDVARYFSDALVIGSDQTMSLGTRVYHKPRDMTEAAEHLRSLSGRMHSLNSAIVLVRNDEVVWRHVSTANMTVRPLSDGFIDRHLAKVGEKALTSVGAYQLEGEGIQLFERIEGDYFTILGLPMLPLLSKLRELGAIDA</sequence>
<name>NTPPB_RHIME</name>
<proteinExistence type="inferred from homology"/>
<keyword id="KW-0963">Cytoplasm</keyword>
<keyword id="KW-0378">Hydrolase</keyword>
<keyword id="KW-0546">Nucleotide metabolism</keyword>
<keyword id="KW-1185">Reference proteome</keyword>